<comment type="function">
    <text>Is probably involved in a pathway contributing to genomic integrity.</text>
</comment>
<comment type="subcellular location">
    <subcellularLocation>
        <location evidence="6">Nucleus</location>
    </subcellularLocation>
</comment>
<comment type="induction">
    <text evidence="5">By heat shock and UV radiation.</text>
</comment>
<comment type="disruption phenotype">
    <text evidence="8">Displays increased levels of spontaneous RAD52 foci in proliferating diploid cells.</text>
</comment>
<comment type="miscellaneous">
    <text evidence="7">Present with 143 molecules/cell in log phase SD medium.</text>
</comment>
<comment type="similarity">
    <text evidence="9">Belongs to the SNF2/RAD54 helicase family.</text>
</comment>
<proteinExistence type="evidence at protein level"/>
<dbReference type="EC" id="3.6.1.-"/>
<dbReference type="EMBL" id="U20865">
    <property type="protein sequence ID" value="AAB67400.1"/>
    <property type="molecule type" value="Genomic_DNA"/>
</dbReference>
<dbReference type="EMBL" id="BK006945">
    <property type="protein sequence ID" value="DAA09561.1"/>
    <property type="molecule type" value="Genomic_DNA"/>
</dbReference>
<dbReference type="PIR" id="S59393">
    <property type="entry name" value="S59393"/>
</dbReference>
<dbReference type="RefSeq" id="NP_013348.1">
    <property type="nucleotide sequence ID" value="NM_001182134.1"/>
</dbReference>
<dbReference type="BioGRID" id="31515">
    <property type="interactions" value="128"/>
</dbReference>
<dbReference type="DIP" id="DIP-6373N"/>
<dbReference type="FunCoup" id="Q06554">
    <property type="interactions" value="293"/>
</dbReference>
<dbReference type="IntAct" id="Q06554">
    <property type="interactions" value="34"/>
</dbReference>
<dbReference type="MINT" id="Q06554"/>
<dbReference type="STRING" id="4932.YLR247C"/>
<dbReference type="GlyGen" id="Q06554">
    <property type="glycosylation" value="2 sites, 1 O-linked glycan (2 sites)"/>
</dbReference>
<dbReference type="iPTMnet" id="Q06554"/>
<dbReference type="PaxDb" id="4932-YLR247C"/>
<dbReference type="PeptideAtlas" id="Q06554"/>
<dbReference type="EnsemblFungi" id="YLR247C_mRNA">
    <property type="protein sequence ID" value="YLR247C"/>
    <property type="gene ID" value="YLR247C"/>
</dbReference>
<dbReference type="GeneID" id="850949"/>
<dbReference type="KEGG" id="sce:YLR247C"/>
<dbReference type="AGR" id="SGD:S000004237"/>
<dbReference type="SGD" id="S000004237">
    <property type="gene designation" value="IRC20"/>
</dbReference>
<dbReference type="VEuPathDB" id="FungiDB:YLR247C"/>
<dbReference type="eggNOG" id="KOG0298">
    <property type="taxonomic scope" value="Eukaryota"/>
</dbReference>
<dbReference type="GeneTree" id="ENSGT00730000111123"/>
<dbReference type="HOGENOM" id="CLU_001592_2_0_1"/>
<dbReference type="InParanoid" id="Q06554"/>
<dbReference type="OMA" id="KAVFFCA"/>
<dbReference type="OrthoDB" id="5330228at2759"/>
<dbReference type="BioCyc" id="YEAST:G3O-32352-MONOMER"/>
<dbReference type="Reactome" id="R-SCE-8866654">
    <property type="pathway name" value="E3 ubiquitin ligases ubiquitinate target proteins"/>
</dbReference>
<dbReference type="BioGRID-ORCS" id="850949">
    <property type="hits" value="0 hits in 10 CRISPR screens"/>
</dbReference>
<dbReference type="PRO" id="PR:Q06554"/>
<dbReference type="Proteomes" id="UP000002311">
    <property type="component" value="Chromosome XII"/>
</dbReference>
<dbReference type="RNAct" id="Q06554">
    <property type="molecule type" value="protein"/>
</dbReference>
<dbReference type="GO" id="GO:0005739">
    <property type="term" value="C:mitochondrion"/>
    <property type="evidence" value="ECO:0007005"/>
    <property type="project" value="SGD"/>
</dbReference>
<dbReference type="GO" id="GO:0005634">
    <property type="term" value="C:nucleus"/>
    <property type="evidence" value="ECO:0007005"/>
    <property type="project" value="SGD"/>
</dbReference>
<dbReference type="GO" id="GO:0005524">
    <property type="term" value="F:ATP binding"/>
    <property type="evidence" value="ECO:0007669"/>
    <property type="project" value="UniProtKB-KW"/>
</dbReference>
<dbReference type="GO" id="GO:0008094">
    <property type="term" value="F:ATP-dependent activity, acting on DNA"/>
    <property type="evidence" value="ECO:0000318"/>
    <property type="project" value="GO_Central"/>
</dbReference>
<dbReference type="GO" id="GO:0004386">
    <property type="term" value="F:helicase activity"/>
    <property type="evidence" value="ECO:0000250"/>
    <property type="project" value="SGD"/>
</dbReference>
<dbReference type="GO" id="GO:0016787">
    <property type="term" value="F:hydrolase activity"/>
    <property type="evidence" value="ECO:0007669"/>
    <property type="project" value="UniProtKB-KW"/>
</dbReference>
<dbReference type="GO" id="GO:0004842">
    <property type="term" value="F:ubiquitin-protein transferase activity"/>
    <property type="evidence" value="ECO:0000314"/>
    <property type="project" value="SGD"/>
</dbReference>
<dbReference type="GO" id="GO:0008270">
    <property type="term" value="F:zinc ion binding"/>
    <property type="evidence" value="ECO:0007669"/>
    <property type="project" value="UniProtKB-KW"/>
</dbReference>
<dbReference type="GO" id="GO:0006281">
    <property type="term" value="P:DNA repair"/>
    <property type="evidence" value="ECO:0000318"/>
    <property type="project" value="GO_Central"/>
</dbReference>
<dbReference type="GO" id="GO:0006303">
    <property type="term" value="P:double-strand break repair via nonhomologous end joining"/>
    <property type="evidence" value="ECO:0000316"/>
    <property type="project" value="SGD"/>
</dbReference>
<dbReference type="GO" id="GO:0045003">
    <property type="term" value="P:double-strand break repair via synthesis-dependent strand annealing"/>
    <property type="evidence" value="ECO:0000315"/>
    <property type="project" value="SGD"/>
</dbReference>
<dbReference type="CDD" id="cd18070">
    <property type="entry name" value="DEXQc_SHPRH"/>
    <property type="match status" value="1"/>
</dbReference>
<dbReference type="CDD" id="cd23135">
    <property type="entry name" value="RING-HC_IRC20-like"/>
    <property type="match status" value="1"/>
</dbReference>
<dbReference type="CDD" id="cd18793">
    <property type="entry name" value="SF2_C_SNF"/>
    <property type="match status" value="1"/>
</dbReference>
<dbReference type="FunFam" id="3.40.50.10810:FF:000088">
    <property type="entry name" value="Irc20p"/>
    <property type="match status" value="1"/>
</dbReference>
<dbReference type="Gene3D" id="3.40.50.300">
    <property type="entry name" value="P-loop containing nucleotide triphosphate hydrolases"/>
    <property type="match status" value="1"/>
</dbReference>
<dbReference type="Gene3D" id="3.40.50.10810">
    <property type="entry name" value="Tandem AAA-ATPase domain"/>
    <property type="match status" value="1"/>
</dbReference>
<dbReference type="Gene3D" id="3.30.40.10">
    <property type="entry name" value="Zinc/RING finger domain, C3HC4 (zinc finger)"/>
    <property type="match status" value="1"/>
</dbReference>
<dbReference type="InterPro" id="IPR052583">
    <property type="entry name" value="ATP-helicase/E3_Ub-Ligase"/>
</dbReference>
<dbReference type="InterPro" id="IPR014001">
    <property type="entry name" value="Helicase_ATP-bd"/>
</dbReference>
<dbReference type="InterPro" id="IPR001650">
    <property type="entry name" value="Helicase_C-like"/>
</dbReference>
<dbReference type="InterPro" id="IPR027417">
    <property type="entry name" value="P-loop_NTPase"/>
</dbReference>
<dbReference type="InterPro" id="IPR038718">
    <property type="entry name" value="SNF2-like_sf"/>
</dbReference>
<dbReference type="InterPro" id="IPR049730">
    <property type="entry name" value="SNF2/RAD54-like_C"/>
</dbReference>
<dbReference type="InterPro" id="IPR000330">
    <property type="entry name" value="SNF2_N"/>
</dbReference>
<dbReference type="InterPro" id="IPR001841">
    <property type="entry name" value="Znf_RING"/>
</dbReference>
<dbReference type="InterPro" id="IPR013083">
    <property type="entry name" value="Znf_RING/FYVE/PHD"/>
</dbReference>
<dbReference type="InterPro" id="IPR017907">
    <property type="entry name" value="Znf_RING_CS"/>
</dbReference>
<dbReference type="PANTHER" id="PTHR45865:SF1">
    <property type="entry name" value="E3 UBIQUITIN-PROTEIN LIGASE SHPRH"/>
    <property type="match status" value="1"/>
</dbReference>
<dbReference type="PANTHER" id="PTHR45865">
    <property type="entry name" value="E3 UBIQUITIN-PROTEIN LIGASE SHPRH FAMILY MEMBER"/>
    <property type="match status" value="1"/>
</dbReference>
<dbReference type="Pfam" id="PF00271">
    <property type="entry name" value="Helicase_C"/>
    <property type="match status" value="1"/>
</dbReference>
<dbReference type="Pfam" id="PF00176">
    <property type="entry name" value="SNF2-rel_dom"/>
    <property type="match status" value="1"/>
</dbReference>
<dbReference type="Pfam" id="PF13923">
    <property type="entry name" value="zf-C3HC4_2"/>
    <property type="match status" value="1"/>
</dbReference>
<dbReference type="SMART" id="SM00487">
    <property type="entry name" value="DEXDc"/>
    <property type="match status" value="1"/>
</dbReference>
<dbReference type="SMART" id="SM00490">
    <property type="entry name" value="HELICc"/>
    <property type="match status" value="1"/>
</dbReference>
<dbReference type="SMART" id="SM00184">
    <property type="entry name" value="RING"/>
    <property type="match status" value="1"/>
</dbReference>
<dbReference type="SUPFAM" id="SSF52540">
    <property type="entry name" value="P-loop containing nucleoside triphosphate hydrolases"/>
    <property type="match status" value="2"/>
</dbReference>
<dbReference type="SUPFAM" id="SSF57850">
    <property type="entry name" value="RING/U-box"/>
    <property type="match status" value="1"/>
</dbReference>
<dbReference type="PROSITE" id="PS51192">
    <property type="entry name" value="HELICASE_ATP_BIND_1"/>
    <property type="match status" value="1"/>
</dbReference>
<dbReference type="PROSITE" id="PS51194">
    <property type="entry name" value="HELICASE_CTER"/>
    <property type="match status" value="1"/>
</dbReference>
<dbReference type="PROSITE" id="PS00518">
    <property type="entry name" value="ZF_RING_1"/>
    <property type="match status" value="1"/>
</dbReference>
<dbReference type="PROSITE" id="PS50089">
    <property type="entry name" value="ZF_RING_2"/>
    <property type="match status" value="1"/>
</dbReference>
<reference key="1">
    <citation type="journal article" date="1997" name="Nature">
        <title>The nucleotide sequence of Saccharomyces cerevisiae chromosome XII.</title>
        <authorList>
            <person name="Johnston M."/>
            <person name="Hillier L.W."/>
            <person name="Riles L."/>
            <person name="Albermann K."/>
            <person name="Andre B."/>
            <person name="Ansorge W."/>
            <person name="Benes V."/>
            <person name="Brueckner M."/>
            <person name="Delius H."/>
            <person name="Dubois E."/>
            <person name="Duesterhoeft A."/>
            <person name="Entian K.-D."/>
            <person name="Floeth M."/>
            <person name="Goffeau A."/>
            <person name="Hebling U."/>
            <person name="Heumann K."/>
            <person name="Heuss-Neitzel D."/>
            <person name="Hilbert H."/>
            <person name="Hilger F."/>
            <person name="Kleine K."/>
            <person name="Koetter P."/>
            <person name="Louis E.J."/>
            <person name="Messenguy F."/>
            <person name="Mewes H.-W."/>
            <person name="Miosga T."/>
            <person name="Moestl D."/>
            <person name="Mueller-Auer S."/>
            <person name="Nentwich U."/>
            <person name="Obermaier B."/>
            <person name="Piravandi E."/>
            <person name="Pohl T.M."/>
            <person name="Portetelle D."/>
            <person name="Purnelle B."/>
            <person name="Rechmann S."/>
            <person name="Rieger M."/>
            <person name="Rinke M."/>
            <person name="Rose M."/>
            <person name="Scharfe M."/>
            <person name="Scherens B."/>
            <person name="Scholler P."/>
            <person name="Schwager C."/>
            <person name="Schwarz S."/>
            <person name="Underwood A.P."/>
            <person name="Urrestarazu L.A."/>
            <person name="Vandenbol M."/>
            <person name="Verhasselt P."/>
            <person name="Vierendeels F."/>
            <person name="Voet M."/>
            <person name="Volckaert G."/>
            <person name="Voss H."/>
            <person name="Wambutt R."/>
            <person name="Wedler E."/>
            <person name="Wedler H."/>
            <person name="Zimmermann F.K."/>
            <person name="Zollner A."/>
            <person name="Hani J."/>
            <person name="Hoheisel J.D."/>
        </authorList>
    </citation>
    <scope>NUCLEOTIDE SEQUENCE [LARGE SCALE GENOMIC DNA]</scope>
    <source>
        <strain>ATCC 204508 / S288c</strain>
    </source>
</reference>
<reference key="2">
    <citation type="journal article" date="2014" name="G3 (Bethesda)">
        <title>The reference genome sequence of Saccharomyces cerevisiae: Then and now.</title>
        <authorList>
            <person name="Engel S.R."/>
            <person name="Dietrich F.S."/>
            <person name="Fisk D.G."/>
            <person name="Binkley G."/>
            <person name="Balakrishnan R."/>
            <person name="Costanzo M.C."/>
            <person name="Dwight S.S."/>
            <person name="Hitz B.C."/>
            <person name="Karra K."/>
            <person name="Nash R.S."/>
            <person name="Weng S."/>
            <person name="Wong E.D."/>
            <person name="Lloyd P."/>
            <person name="Skrzypek M.S."/>
            <person name="Miyasato S.R."/>
            <person name="Simison M."/>
            <person name="Cherry J.M."/>
        </authorList>
    </citation>
    <scope>GENOME REANNOTATION</scope>
    <source>
        <strain>ATCC 204508 / S288c</strain>
    </source>
</reference>
<reference key="3">
    <citation type="journal article" date="1999" name="Yeast">
        <title>Systematic identification, classification, and characterization of the open reading frames which encode novel helicase-related proteins in Saccharomyces cerevisiae by gene disruption and Northern analysis.</title>
        <authorList>
            <person name="Shiratori A."/>
            <person name="Shibata T."/>
            <person name="Arisawa M."/>
            <person name="Hanaoka F."/>
            <person name="Murakami Y."/>
            <person name="Eki T."/>
        </authorList>
    </citation>
    <scope>INDUCTION</scope>
</reference>
<reference key="4">
    <citation type="journal article" date="2003" name="Nature">
        <title>Global analysis of protein localization in budding yeast.</title>
        <authorList>
            <person name="Huh W.-K."/>
            <person name="Falvo J.V."/>
            <person name="Gerke L.C."/>
            <person name="Carroll A.S."/>
            <person name="Howson R.W."/>
            <person name="Weissman J.S."/>
            <person name="O'Shea E.K."/>
        </authorList>
    </citation>
    <scope>SUBCELLULAR LOCATION [LARGE SCALE ANALYSIS]</scope>
</reference>
<reference key="5">
    <citation type="journal article" date="2003" name="Nature">
        <title>Global analysis of protein expression in yeast.</title>
        <authorList>
            <person name="Ghaemmaghami S."/>
            <person name="Huh W.-K."/>
            <person name="Bower K."/>
            <person name="Howson R.W."/>
            <person name="Belle A."/>
            <person name="Dephoure N."/>
            <person name="O'Shea E.K."/>
            <person name="Weissman J.S."/>
        </authorList>
    </citation>
    <scope>LEVEL OF PROTEIN EXPRESSION [LARGE SCALE ANALYSIS]</scope>
</reference>
<reference key="6">
    <citation type="journal article" date="2007" name="PLoS Genet.">
        <title>Genome-wide analysis of Rad52 foci reveals diverse mechanisms impacting recombination.</title>
        <authorList>
            <person name="Alvaro D."/>
            <person name="Lisby M."/>
            <person name="Rothstein R."/>
        </authorList>
    </citation>
    <scope>DISRUPTION PHENOTYPE</scope>
</reference>
<reference key="7">
    <citation type="journal article" date="2009" name="Science">
        <title>Global analysis of Cdk1 substrate phosphorylation sites provides insights into evolution.</title>
        <authorList>
            <person name="Holt L.J."/>
            <person name="Tuch B.B."/>
            <person name="Villen J."/>
            <person name="Johnson A.D."/>
            <person name="Gygi S.P."/>
            <person name="Morgan D.O."/>
        </authorList>
    </citation>
    <scope>PHOSPHORYLATION [LARGE SCALE ANALYSIS] AT SER-810</scope>
    <scope>IDENTIFICATION BY MASS SPECTROMETRY [LARGE SCALE ANALYSIS]</scope>
</reference>
<reference key="8">
    <citation type="journal article" date="2012" name="Proc. Natl. Acad. Sci. U.S.A.">
        <title>N-terminal acetylome analyses and functional insights of the N-terminal acetyltransferase NatB.</title>
        <authorList>
            <person name="Van Damme P."/>
            <person name="Lasa M."/>
            <person name="Polevoda B."/>
            <person name="Gazquez C."/>
            <person name="Elosegui-Artola A."/>
            <person name="Kim D.S."/>
            <person name="De Juan-Pardo E."/>
            <person name="Demeyer K."/>
            <person name="Hole K."/>
            <person name="Larrea E."/>
            <person name="Timmerman E."/>
            <person name="Prieto J."/>
            <person name="Arnesen T."/>
            <person name="Sherman F."/>
            <person name="Gevaert K."/>
            <person name="Aldabe R."/>
        </authorList>
    </citation>
    <scope>ACETYLATION [LARGE SCALE ANALYSIS] AT SER-2</scope>
    <scope>CLEAVAGE OF INITIATOR METHIONINE [LARGE SCALE ANALYSIS]</scope>
    <scope>IDENTIFICATION BY MASS SPECTROMETRY [LARGE SCALE ANALYSIS]</scope>
</reference>
<feature type="initiator methionine" description="Removed" evidence="11">
    <location>
        <position position="1"/>
    </location>
</feature>
<feature type="chain" id="PRO_0000268181" description="Uncharacterized ATP-dependent helicase IRC20">
    <location>
        <begin position="2"/>
        <end position="1556"/>
    </location>
</feature>
<feature type="domain" description="Helicase ATP-binding" evidence="2">
    <location>
        <begin position="378"/>
        <end position="583"/>
    </location>
</feature>
<feature type="domain" description="Helicase C-terminal" evidence="3">
    <location>
        <begin position="1363"/>
        <end position="1531"/>
    </location>
</feature>
<feature type="zinc finger region" description="RING-type" evidence="1">
    <location>
        <begin position="1239"/>
        <end position="1277"/>
    </location>
</feature>
<feature type="region of interest" description="Disordered" evidence="4">
    <location>
        <begin position="145"/>
        <end position="170"/>
    </location>
</feature>
<feature type="region of interest" description="Disordered" evidence="4">
    <location>
        <begin position="810"/>
        <end position="850"/>
    </location>
</feature>
<feature type="region of interest" description="Disordered" evidence="4">
    <location>
        <begin position="1297"/>
        <end position="1319"/>
    </location>
</feature>
<feature type="region of interest" description="Disordered" evidence="4">
    <location>
        <begin position="1508"/>
        <end position="1534"/>
    </location>
</feature>
<feature type="compositionally biased region" description="Basic and acidic residues" evidence="4">
    <location>
        <begin position="145"/>
        <end position="156"/>
    </location>
</feature>
<feature type="compositionally biased region" description="Basic and acidic residues" evidence="4">
    <location>
        <begin position="817"/>
        <end position="827"/>
    </location>
</feature>
<feature type="compositionally biased region" description="Basic and acidic residues" evidence="4">
    <location>
        <begin position="834"/>
        <end position="846"/>
    </location>
</feature>
<feature type="compositionally biased region" description="Basic and acidic residues" evidence="4">
    <location>
        <begin position="1297"/>
        <end position="1309"/>
    </location>
</feature>
<feature type="compositionally biased region" description="Low complexity" evidence="4">
    <location>
        <begin position="1310"/>
        <end position="1319"/>
    </location>
</feature>
<feature type="compositionally biased region" description="Basic and acidic residues" evidence="4">
    <location>
        <begin position="1508"/>
        <end position="1518"/>
    </location>
</feature>
<feature type="compositionally biased region" description="Acidic residues" evidence="4">
    <location>
        <begin position="1519"/>
        <end position="1529"/>
    </location>
</feature>
<feature type="binding site" evidence="2">
    <location>
        <begin position="391"/>
        <end position="398"/>
    </location>
    <ligand>
        <name>ATP</name>
        <dbReference type="ChEBI" id="CHEBI:30616"/>
    </ligand>
</feature>
<feature type="modified residue" description="N-acetylserine" evidence="11">
    <location>
        <position position="2"/>
    </location>
</feature>
<feature type="modified residue" description="Phosphoserine" evidence="10">
    <location>
        <position position="810"/>
    </location>
</feature>
<protein>
    <recommendedName>
        <fullName>Uncharacterized ATP-dependent helicase IRC20</fullName>
        <ecNumber>3.6.1.-</ecNumber>
    </recommendedName>
    <alternativeName>
        <fullName>Increased recombination centers protein 20</fullName>
    </alternativeName>
</protein>
<evidence type="ECO:0000255" key="1">
    <source>
        <dbReference type="PROSITE-ProRule" id="PRU00175"/>
    </source>
</evidence>
<evidence type="ECO:0000255" key="2">
    <source>
        <dbReference type="PROSITE-ProRule" id="PRU00541"/>
    </source>
</evidence>
<evidence type="ECO:0000255" key="3">
    <source>
        <dbReference type="PROSITE-ProRule" id="PRU00542"/>
    </source>
</evidence>
<evidence type="ECO:0000256" key="4">
    <source>
        <dbReference type="SAM" id="MobiDB-lite"/>
    </source>
</evidence>
<evidence type="ECO:0000269" key="5">
    <source>
    </source>
</evidence>
<evidence type="ECO:0000269" key="6">
    <source>
    </source>
</evidence>
<evidence type="ECO:0000269" key="7">
    <source>
    </source>
</evidence>
<evidence type="ECO:0000269" key="8">
    <source>
    </source>
</evidence>
<evidence type="ECO:0000305" key="9"/>
<evidence type="ECO:0007744" key="10">
    <source>
    </source>
</evidence>
<evidence type="ECO:0007744" key="11">
    <source>
    </source>
</evidence>
<name>IRC20_YEAST</name>
<sequence>MSAVGALLAREYNVTAEKCDFFLENGSFDSVIAALPALNQEQETVTQKVSKNGKELINVASVNIEIPERISLSNNGRQLFKFIVDIEILPCENDNEATLVVSSDSVSLFQIGFKMENNSKIAVDKQLPLILDICAHKNQERALRNQLENRKSLERKPSRKRRKKNSNVNDPEKLLKSRIHELSLSYKDFECSPVVFRYNDSSLTWVLSFNLKLKFLNNKFNRFSVEANQILDLTFSNRDENEFERYHKHSHIHSNFIQKQFISQILEYSKDRLSKIKPFLPQSIPDLKVNLLPFQRESVEWMLIKEGHGNSLSDTPTVIDEVGLIDFMNEYYAYGYELIARSPDEVGPSLLWNKLTGYILTTEDAAHLYNQYRKERLSGDYPVCAKGVLAEEMGLGKTIEILSLILLNRRKLKDSEATFIDDENRTITKTKTTLIICPNAILKQWLEEIELHANSLKWYTYRGYNEIMKDCKTVDEAVQQLCQYDIIVTSYNIIATEVHHAEFNRSIRSRRLKSPKYDYSSPLALMQFYRIILDEVQMLRSSSTYSAKCTSLLHRIHTWGVSGTPIQNIYNFRMIMSYLKLHPFCDEVDFIRTLQEEIKLRNEAKDYTSNDFVCQLKGVRFSIKDCMNIFYRYDLCIRHSKANVASQIHIPRQHNFIIPLEFAPIEWDNYLNLWNNFLELSGYNSDGSGSPRVSNAFLNEWLSRLRYICCHALFPEILSTRQKRLHGHLSRISNIDDILISMRMDAFDSLIGYYRERFHLSIKQAQYELEISNTPAKALESFIKIRDDLMIHIRQKFNVEDPFDKSLNLSEDEDEHMDERFGEKETSSGDESDREINGAKNHDNHNNDGMLSNHLKKKGLRAMMNLLHDCYFFLGSVYYNLGTRKLEEADDKHRKEKTEEVVYSDVFPKNELEEIEENRLLEQENYANAEILRKSILSSEARKVDMTIKMARTKFAPMTSNIPLRLINIEFDHKNDYSSNLAVSRCFKSLSKLIEGLNEQTKNFNELLDELLIIIYEPVHRTEDDDSTNKIIGNEEYSTSIDSQDKIFSLLGCLEIILQNRDNILTSESEVKIPKHLVPEGSIISKYQKQLLNSLRLISGTPLRTVFDELKNSRIVRRISSSNESESTIQNFEDYLLQYEVESKSLFKYNKQVRESLKILGSIYNAKTEYYSQLQRISDSLVSLHSLSAPQLSHLIRTINKSLGGTLDAKINNIESRLIYLKNLSRLKDTLNDNQILSCSICLGEVEIGAIIKCGHYFCKSCILTWLRAHSKCPICKGFCSISEVYNFKFKNSTEKREKEIQEPRREGADSSQDNSNENSIISNMSEVEKLFGNKYEQFHQINEVHQIHIKESFGAKIDFVIKLISYLRLKSEQENADPPQVILYSQKTEYLKVIGKVLKLYHIEHLACLSNTANVGETINNFKRQPSVTCLLLNVKTLGAGLNLINAKHIFLLDPILNNSDELQAMGRNNRIGQDEETFVWNFMIRNTVEENILRYKCILEERKRKEKSKKGDKYDEAQDETDNEESDDAKFEISVVDQEVSNEHLWNCFFHGSD</sequence>
<accession>Q06554</accession>
<accession>D6VYP5</accession>
<gene>
    <name type="primary">IRC20</name>
    <name type="ordered locus">YLR247C</name>
</gene>
<organism>
    <name type="scientific">Saccharomyces cerevisiae (strain ATCC 204508 / S288c)</name>
    <name type="common">Baker's yeast</name>
    <dbReference type="NCBI Taxonomy" id="559292"/>
    <lineage>
        <taxon>Eukaryota</taxon>
        <taxon>Fungi</taxon>
        <taxon>Dikarya</taxon>
        <taxon>Ascomycota</taxon>
        <taxon>Saccharomycotina</taxon>
        <taxon>Saccharomycetes</taxon>
        <taxon>Saccharomycetales</taxon>
        <taxon>Saccharomycetaceae</taxon>
        <taxon>Saccharomyces</taxon>
    </lineage>
</organism>
<keyword id="KW-0007">Acetylation</keyword>
<keyword id="KW-0067">ATP-binding</keyword>
<keyword id="KW-0347">Helicase</keyword>
<keyword id="KW-0378">Hydrolase</keyword>
<keyword id="KW-0479">Metal-binding</keyword>
<keyword id="KW-0547">Nucleotide-binding</keyword>
<keyword id="KW-0539">Nucleus</keyword>
<keyword id="KW-0597">Phosphoprotein</keyword>
<keyword id="KW-1185">Reference proteome</keyword>
<keyword id="KW-0346">Stress response</keyword>
<keyword id="KW-0862">Zinc</keyword>
<keyword id="KW-0863">Zinc-finger</keyword>